<reference evidence="5" key="1">
    <citation type="journal article" date="2007" name="Nature">
        <title>Evolution of genes and genomes on the Drosophila phylogeny.</title>
        <authorList>
            <consortium name="Drosophila 12 genomes consortium"/>
        </authorList>
    </citation>
    <scope>NUCLEOTIDE SEQUENCE [LARGE SCALE GENOMIC DNA]</scope>
    <source>
        <strain evidence="5">Tucson 14021-0224.01</strain>
    </source>
</reference>
<protein>
    <recommendedName>
        <fullName evidence="1">UPAR/Ly6 domain-containing protein qvr</fullName>
    </recommendedName>
    <alternativeName>
        <fullName evidence="1">Protein quiver</fullName>
    </alternativeName>
    <alternativeName>
        <fullName evidence="1">Protein sleepless</fullName>
    </alternativeName>
</protein>
<comment type="function">
    <text evidence="1">Bifunctional regulator of neuronal activity in the mushroom body, and possibly other regions of the brain, that acts as a signaling molecule required for homeostatic regulation of sleep under normal conditions and after sleep deprivation. Reduces neuronal excitability by enhancing Sh/shaker K(+) channel activity; possibly by stabilizing Sh/shaker to increase protein levels, accelerating its activation kinetics, slowing C-type inactivation and enhancing recovery from inactivation. Specifically affects the A-type K(+) current. Antagonizes nicotinic acetylcholine receptors (nAChRs) to reduce synaptic transmission, possibly by preventing their localization to the cell surface. Required for regulation of neuromuscular excitability and plasticity at neuromuscular junctions.</text>
</comment>
<comment type="subunit">
    <text evidence="1">Interacts (via loop 2 of the three-fingered Ly-6 domain) with Sh/shaker; this interaction may stabilize both components of the complex and may be required for targeting or retention of Sh/shaker to neural cell projections. Interacts (via loop 2 of the three-fingered Ly-6 domain) with nAChRalpha3 and potentially other nicotinic acetylcholine receptors; this interaction is required for antagonism of nicotinic acetylcholine receptors.</text>
</comment>
<comment type="subcellular location">
    <subcellularLocation>
        <location evidence="1">Cell membrane</location>
        <topology evidence="1">Lipid-anchor</topology>
        <topology evidence="1">GPI-anchor</topology>
        <orientation evidence="1">Extracellular side</orientation>
    </subcellularLocation>
    <subcellularLocation>
        <location evidence="1">Membrane raft</location>
        <topology evidence="1">Lipid-anchor</topology>
        <topology evidence="1">GPI-anchor</topology>
        <orientation evidence="1">Extracellular side</orientation>
    </subcellularLocation>
</comment>
<comment type="tissue specificity">
    <text evidence="1">Expressed in mushroom body (at protein level); overlaps with expression of Sh/shaker and nicotinic acetylcholine receptor (nAChR) components also involved in sleep regulation. Expressed in the adult brain and head. Enriched in the mushroom body, anterior optic tubercle, superior protocerebrum, antennal nerve and visual projection neuron fibers projecting into the lobula plate of the optic lobe.</text>
</comment>
<comment type="domain">
    <text evidence="1">Consists of a single Ly-6 domain, adopting a three finger fold stabilized by 5 disulfide bonds. The first loop contains a region essential for protein folding or that is required for localization to the cell surface. The second loop mediates protein-protein interactions.</text>
</comment>
<comment type="PTM">
    <text evidence="1">N-glycosylated probably on Asn-57.</text>
</comment>
<comment type="similarity">
    <text evidence="4">Belongs to the quiver family.</text>
</comment>
<name>QVR_DROER</name>
<keyword id="KW-0090">Biological rhythms</keyword>
<keyword id="KW-1003">Cell membrane</keyword>
<keyword id="KW-1015">Disulfide bond</keyword>
<keyword id="KW-0325">Glycoprotein</keyword>
<keyword id="KW-0336">GPI-anchor</keyword>
<keyword id="KW-0449">Lipoprotein</keyword>
<keyword id="KW-0472">Membrane</keyword>
<keyword id="KW-0732">Signal</keyword>
<keyword id="KW-0812">Transmembrane</keyword>
<keyword id="KW-1133">Transmembrane helix</keyword>
<sequence length="158" mass="18124">MWTQRNAVGNWLLVLTAVIGFLTFIWIPQTSAECQTRSIYCYECDSWTDARCKDPFNYTALPRDQPPLMTCNGCCVKMVRHQRSPYEVVRRMCTSQLQINLFMVDHVCMMESSGNGHMCFCEEDMCNSSKNLHTNGCQLHLIPIAVAVSWLMGQLLSR</sequence>
<dbReference type="EMBL" id="CH954179">
    <property type="protein sequence ID" value="EDV56458.1"/>
    <property type="molecule type" value="Genomic_DNA"/>
</dbReference>
<dbReference type="GlyCosmos" id="B3NSF6">
    <property type="glycosylation" value="1 site, No reported glycans"/>
</dbReference>
<dbReference type="EnsemblMetazoa" id="FBtr0140258">
    <property type="protein sequence ID" value="FBpp0138750"/>
    <property type="gene ID" value="FBgn0112395"/>
</dbReference>
<dbReference type="EnsemblMetazoa" id="XM_001976022.3">
    <property type="protein sequence ID" value="XP_001976058.1"/>
    <property type="gene ID" value="LOC6546862"/>
</dbReference>
<dbReference type="GeneID" id="6546862"/>
<dbReference type="KEGG" id="der:6546862"/>
<dbReference type="eggNOG" id="ENOG502S199">
    <property type="taxonomic scope" value="Eukaryota"/>
</dbReference>
<dbReference type="HOGENOM" id="CLU_137010_0_0_1"/>
<dbReference type="OMA" id="FCERDNC"/>
<dbReference type="OrthoDB" id="9991292at2759"/>
<dbReference type="PhylomeDB" id="B3NSF6"/>
<dbReference type="ChiTaRS" id="qvr">
    <property type="organism name" value="fly"/>
</dbReference>
<dbReference type="Proteomes" id="UP000008711">
    <property type="component" value="Unassembled WGS sequence"/>
</dbReference>
<dbReference type="GO" id="GO:0009897">
    <property type="term" value="C:external side of plasma membrane"/>
    <property type="evidence" value="ECO:0007669"/>
    <property type="project" value="EnsemblMetazoa"/>
</dbReference>
<dbReference type="GO" id="GO:0045121">
    <property type="term" value="C:membrane raft"/>
    <property type="evidence" value="ECO:0007669"/>
    <property type="project" value="UniProtKB-SubCell"/>
</dbReference>
<dbReference type="GO" id="GO:0005886">
    <property type="term" value="C:plasma membrane"/>
    <property type="evidence" value="ECO:0000250"/>
    <property type="project" value="UniProtKB"/>
</dbReference>
<dbReference type="GO" id="GO:0030550">
    <property type="term" value="F:acetylcholine receptor inhibitor activity"/>
    <property type="evidence" value="ECO:0007669"/>
    <property type="project" value="EnsemblMetazoa"/>
</dbReference>
<dbReference type="GO" id="GO:0034235">
    <property type="term" value="F:GPI anchor binding"/>
    <property type="evidence" value="ECO:0000250"/>
    <property type="project" value="UniProtKB"/>
</dbReference>
<dbReference type="GO" id="GO:0099104">
    <property type="term" value="F:potassium channel activator activity"/>
    <property type="evidence" value="ECO:0007669"/>
    <property type="project" value="EnsemblMetazoa"/>
</dbReference>
<dbReference type="GO" id="GO:0045837">
    <property type="term" value="P:negative regulation of membrane potential"/>
    <property type="evidence" value="ECO:0007669"/>
    <property type="project" value="EnsemblMetazoa"/>
</dbReference>
<dbReference type="GO" id="GO:0045938">
    <property type="term" value="P:positive regulation of circadian sleep/wake cycle, sleep"/>
    <property type="evidence" value="ECO:0007669"/>
    <property type="project" value="EnsemblMetazoa"/>
</dbReference>
<dbReference type="GO" id="GO:0045187">
    <property type="term" value="P:regulation of circadian sleep/wake cycle, sleep"/>
    <property type="evidence" value="ECO:0000250"/>
    <property type="project" value="UniProtKB"/>
</dbReference>
<dbReference type="GO" id="GO:0032222">
    <property type="term" value="P:regulation of synaptic transmission, cholinergic"/>
    <property type="evidence" value="ECO:0007669"/>
    <property type="project" value="EnsemblMetazoa"/>
</dbReference>
<dbReference type="GO" id="GO:0048511">
    <property type="term" value="P:rhythmic process"/>
    <property type="evidence" value="ECO:0007669"/>
    <property type="project" value="UniProtKB-KW"/>
</dbReference>
<dbReference type="GO" id="GO:0030431">
    <property type="term" value="P:sleep"/>
    <property type="evidence" value="ECO:0007669"/>
    <property type="project" value="EnsemblMetazoa"/>
</dbReference>
<dbReference type="CDD" id="cd23595">
    <property type="entry name" value="TFP_LU_ECD_Qvr"/>
    <property type="match status" value="1"/>
</dbReference>
<dbReference type="InterPro" id="IPR031424">
    <property type="entry name" value="QVR-like"/>
</dbReference>
<dbReference type="InterPro" id="IPR050975">
    <property type="entry name" value="Sleep_regulator"/>
</dbReference>
<dbReference type="PANTHER" id="PTHR33562">
    <property type="entry name" value="ATILLA, ISOFORM B-RELATED-RELATED"/>
    <property type="match status" value="1"/>
</dbReference>
<dbReference type="PANTHER" id="PTHR33562:SF31">
    <property type="entry name" value="PROTEIN QUIVER"/>
    <property type="match status" value="1"/>
</dbReference>
<dbReference type="Pfam" id="PF17064">
    <property type="entry name" value="QVR"/>
    <property type="match status" value="1"/>
</dbReference>
<proteinExistence type="inferred from homology"/>
<gene>
    <name evidence="1" type="primary">qvr</name>
    <name evidence="1" type="synonym">sss</name>
    <name type="ORF">GG20204</name>
</gene>
<evidence type="ECO:0000250" key="1">
    <source>
        <dbReference type="UniProtKB" id="B5A5T4"/>
    </source>
</evidence>
<evidence type="ECO:0000255" key="2"/>
<evidence type="ECO:0000255" key="3">
    <source>
        <dbReference type="PROSITE-ProRule" id="PRU00498"/>
    </source>
</evidence>
<evidence type="ECO:0000305" key="4"/>
<evidence type="ECO:0000312" key="5">
    <source>
        <dbReference type="EMBL" id="EDV56458.1"/>
    </source>
</evidence>
<accession>B3NSF6</accession>
<feature type="signal peptide" evidence="2">
    <location>
        <begin position="1"/>
        <end position="32"/>
    </location>
</feature>
<feature type="chain" id="PRO_0000365458" description="UPAR/Ly6 domain-containing protein qvr" evidence="2">
    <location>
        <begin position="33"/>
        <end position="127"/>
    </location>
</feature>
<feature type="propeptide" id="PRO_0000365459" description="Removed in mature form" evidence="1">
    <location>
        <begin position="128"/>
        <end position="158"/>
    </location>
</feature>
<feature type="transmembrane region" description="Helical" evidence="2">
    <location>
        <begin position="136"/>
        <end position="156"/>
    </location>
</feature>
<feature type="region of interest" description="Loop 1; may be required for cell surface localization or be essential for protein folding" evidence="1">
    <location>
        <begin position="54"/>
        <end position="67"/>
    </location>
</feature>
<feature type="region of interest" description="Loop 2; required for interaction with Sh/shaker and nAChRalpha3/Nicotinic acetylcholine receptor alpha3" evidence="1">
    <location>
        <begin position="77"/>
        <end position="91"/>
    </location>
</feature>
<feature type="lipid moiety-binding region" description="GPI-anchor amidated asparagine" evidence="1">
    <location>
        <position position="127"/>
    </location>
</feature>
<feature type="glycosylation site" description="N-linked (GlcNAc...) asparagine" evidence="1 3">
    <location>
        <position position="57"/>
    </location>
</feature>
<feature type="disulfide bond" evidence="1">
    <location>
        <begin position="41"/>
        <end position="75"/>
    </location>
</feature>
<feature type="disulfide bond" evidence="1">
    <location>
        <begin position="44"/>
        <end position="52"/>
    </location>
</feature>
<feature type="disulfide bond" evidence="1">
    <location>
        <begin position="71"/>
        <end position="93"/>
    </location>
</feature>
<feature type="disulfide bond" evidence="1">
    <location>
        <begin position="108"/>
        <end position="119"/>
    </location>
</feature>
<feature type="disulfide bond" evidence="1">
    <location>
        <begin position="121"/>
        <end position="126"/>
    </location>
</feature>
<organism>
    <name type="scientific">Drosophila erecta</name>
    <name type="common">Fruit fly</name>
    <dbReference type="NCBI Taxonomy" id="7220"/>
    <lineage>
        <taxon>Eukaryota</taxon>
        <taxon>Metazoa</taxon>
        <taxon>Ecdysozoa</taxon>
        <taxon>Arthropoda</taxon>
        <taxon>Hexapoda</taxon>
        <taxon>Insecta</taxon>
        <taxon>Pterygota</taxon>
        <taxon>Neoptera</taxon>
        <taxon>Endopterygota</taxon>
        <taxon>Diptera</taxon>
        <taxon>Brachycera</taxon>
        <taxon>Muscomorpha</taxon>
        <taxon>Ephydroidea</taxon>
        <taxon>Drosophilidae</taxon>
        <taxon>Drosophila</taxon>
        <taxon>Sophophora</taxon>
    </lineage>
</organism>